<sequence length="283" mass="32200">MLLKCVCRAGIISIKGIFPRWYSNSQKVANLGQITDYLVVKGVPNLLQKMFKESVLADNVVFRLFPTSHPYIPVLHGKSKYMASLNAMRMIVRKFILGDECRLHISSVKTLTSTSHDEEVKSALQSYNTITCNDKLVIKWQSCIPEDHCKITKLEINDRLKEEKRGNGAGGSFSMRSVPVIDYILHPTANNLNQSVISEYLENAAERSMENKVNETQNSKEDEKKKNDGDGKRSKKKRLSRLIKGTFIFEFNEENSKILVHTIEDVELIHYEKKIATRGAFAC</sequence>
<feature type="chain" id="PRO_0000202799" description="Uncharacterized protein YGR053C">
    <location>
        <begin position="1"/>
        <end position="283"/>
    </location>
</feature>
<feature type="region of interest" description="Disordered" evidence="1">
    <location>
        <begin position="208"/>
        <end position="237"/>
    </location>
</feature>
<feature type="compositionally biased region" description="Basic and acidic residues" evidence="1">
    <location>
        <begin position="208"/>
        <end position="232"/>
    </location>
</feature>
<name>YG21_YEAST</name>
<dbReference type="EMBL" id="Z72838">
    <property type="protein sequence ID" value="CAA97053.1"/>
    <property type="molecule type" value="Genomic_DNA"/>
</dbReference>
<dbReference type="EMBL" id="AY557823">
    <property type="protein sequence ID" value="AAS56149.1"/>
    <property type="molecule type" value="Genomic_DNA"/>
</dbReference>
<dbReference type="EMBL" id="BK006941">
    <property type="protein sequence ID" value="DAA08149.1"/>
    <property type="molecule type" value="Genomic_DNA"/>
</dbReference>
<dbReference type="PIR" id="S64347">
    <property type="entry name" value="S64347"/>
</dbReference>
<dbReference type="BioGRID" id="33298">
    <property type="interactions" value="52"/>
</dbReference>
<dbReference type="DIP" id="DIP-3868N"/>
<dbReference type="FunCoup" id="P53234">
    <property type="interactions" value="3"/>
</dbReference>
<dbReference type="STRING" id="4932.YGR053C"/>
<dbReference type="PaxDb" id="4932-YGR053C"/>
<dbReference type="PeptideAtlas" id="P53234"/>
<dbReference type="EnsemblFungi" id="YGR053C_mRNA">
    <property type="protein sequence ID" value="YGR053C"/>
    <property type="gene ID" value="YGR053C"/>
</dbReference>
<dbReference type="KEGG" id="sce:YGR053C"/>
<dbReference type="AGR" id="SGD:S000003285"/>
<dbReference type="SGD" id="S000003285">
    <property type="gene designation" value="YGR053C"/>
</dbReference>
<dbReference type="VEuPathDB" id="FungiDB:YGR053C"/>
<dbReference type="eggNOG" id="ENOG502S29P">
    <property type="taxonomic scope" value="Eukaryota"/>
</dbReference>
<dbReference type="HOGENOM" id="CLU_068099_1_0_1"/>
<dbReference type="InParanoid" id="P53234"/>
<dbReference type="OMA" id="FIFELNE"/>
<dbReference type="OrthoDB" id="5329385at2759"/>
<dbReference type="BioCyc" id="YEAST:G3O-30770-MONOMER"/>
<dbReference type="BioGRID-ORCS" id="852944">
    <property type="hits" value="0 hits in 10 CRISPR screens"/>
</dbReference>
<dbReference type="PRO" id="PR:P53234"/>
<dbReference type="Proteomes" id="UP000002311">
    <property type="component" value="Chromosome VII"/>
</dbReference>
<dbReference type="RNAct" id="P53234">
    <property type="molecule type" value="protein"/>
</dbReference>
<dbReference type="InterPro" id="IPR031342">
    <property type="entry name" value="Mug163-like"/>
</dbReference>
<dbReference type="Pfam" id="PF17119">
    <property type="entry name" value="MMU163"/>
    <property type="match status" value="1"/>
</dbReference>
<organism>
    <name type="scientific">Saccharomyces cerevisiae (strain ATCC 204508 / S288c)</name>
    <name type="common">Baker's yeast</name>
    <dbReference type="NCBI Taxonomy" id="559292"/>
    <lineage>
        <taxon>Eukaryota</taxon>
        <taxon>Fungi</taxon>
        <taxon>Dikarya</taxon>
        <taxon>Ascomycota</taxon>
        <taxon>Saccharomycotina</taxon>
        <taxon>Saccharomycetes</taxon>
        <taxon>Saccharomycetales</taxon>
        <taxon>Saccharomycetaceae</taxon>
        <taxon>Saccharomyces</taxon>
    </lineage>
</organism>
<gene>
    <name type="ordered locus">YGR053C</name>
</gene>
<protein>
    <recommendedName>
        <fullName>Uncharacterized protein YGR053C</fullName>
    </recommendedName>
</protein>
<reference key="1">
    <citation type="journal article" date="1997" name="Nature">
        <title>The nucleotide sequence of Saccharomyces cerevisiae chromosome VII.</title>
        <authorList>
            <person name="Tettelin H."/>
            <person name="Agostoni-Carbone M.L."/>
            <person name="Albermann K."/>
            <person name="Albers M."/>
            <person name="Arroyo J."/>
            <person name="Backes U."/>
            <person name="Barreiros T."/>
            <person name="Bertani I."/>
            <person name="Bjourson A.J."/>
            <person name="Brueckner M."/>
            <person name="Bruschi C.V."/>
            <person name="Carignani G."/>
            <person name="Castagnoli L."/>
            <person name="Cerdan E."/>
            <person name="Clemente M.L."/>
            <person name="Coblenz A."/>
            <person name="Coglievina M."/>
            <person name="Coissac E."/>
            <person name="Defoor E."/>
            <person name="Del Bino S."/>
            <person name="Delius H."/>
            <person name="Delneri D."/>
            <person name="de Wergifosse P."/>
            <person name="Dujon B."/>
            <person name="Durand P."/>
            <person name="Entian K.-D."/>
            <person name="Eraso P."/>
            <person name="Escribano V."/>
            <person name="Fabiani L."/>
            <person name="Fartmann B."/>
            <person name="Feroli F."/>
            <person name="Feuermann M."/>
            <person name="Frontali L."/>
            <person name="Garcia-Gonzalez M."/>
            <person name="Garcia-Saez M.I."/>
            <person name="Goffeau A."/>
            <person name="Guerreiro P."/>
            <person name="Hani J."/>
            <person name="Hansen M."/>
            <person name="Hebling U."/>
            <person name="Hernandez K."/>
            <person name="Heumann K."/>
            <person name="Hilger F."/>
            <person name="Hofmann B."/>
            <person name="Indge K.J."/>
            <person name="James C.M."/>
            <person name="Klima R."/>
            <person name="Koetter P."/>
            <person name="Kramer B."/>
            <person name="Kramer W."/>
            <person name="Lauquin G."/>
            <person name="Leuther H."/>
            <person name="Louis E.J."/>
            <person name="Maillier E."/>
            <person name="Marconi A."/>
            <person name="Martegani E."/>
            <person name="Mazon M.J."/>
            <person name="Mazzoni C."/>
            <person name="McReynolds A.D.K."/>
            <person name="Melchioretto P."/>
            <person name="Mewes H.-W."/>
            <person name="Minenkova O."/>
            <person name="Mueller-Auer S."/>
            <person name="Nawrocki A."/>
            <person name="Netter P."/>
            <person name="Neu R."/>
            <person name="Nombela C."/>
            <person name="Oliver S.G."/>
            <person name="Panzeri L."/>
            <person name="Paoluzi S."/>
            <person name="Plevani P."/>
            <person name="Portetelle D."/>
            <person name="Portillo F."/>
            <person name="Potier S."/>
            <person name="Purnelle B."/>
            <person name="Rieger M."/>
            <person name="Riles L."/>
            <person name="Rinaldi T."/>
            <person name="Robben J."/>
            <person name="Rodrigues-Pousada C."/>
            <person name="Rodriguez-Belmonte E."/>
            <person name="Rodriguez-Torres A.M."/>
            <person name="Rose M."/>
            <person name="Ruzzi M."/>
            <person name="Saliola M."/>
            <person name="Sanchez-Perez M."/>
            <person name="Schaefer B."/>
            <person name="Schaefer M."/>
            <person name="Scharfe M."/>
            <person name="Schmidheini T."/>
            <person name="Schreer A."/>
            <person name="Skala J."/>
            <person name="Souciet J.-L."/>
            <person name="Steensma H.Y."/>
            <person name="Talla E."/>
            <person name="Thierry A."/>
            <person name="Vandenbol M."/>
            <person name="van der Aart Q.J.M."/>
            <person name="Van Dyck L."/>
            <person name="Vanoni M."/>
            <person name="Verhasselt P."/>
            <person name="Voet M."/>
            <person name="Volckaert G."/>
            <person name="Wambutt R."/>
            <person name="Watson M.D."/>
            <person name="Weber N."/>
            <person name="Wedler E."/>
            <person name="Wedler H."/>
            <person name="Wipfli P."/>
            <person name="Wolf K."/>
            <person name="Wright L.F."/>
            <person name="Zaccaria P."/>
            <person name="Zimmermann M."/>
            <person name="Zollner A."/>
            <person name="Kleine K."/>
        </authorList>
    </citation>
    <scope>NUCLEOTIDE SEQUENCE [LARGE SCALE GENOMIC DNA]</scope>
    <source>
        <strain>ATCC 204508 / S288c</strain>
    </source>
</reference>
<reference key="2">
    <citation type="journal article" date="2014" name="G3 (Bethesda)">
        <title>The reference genome sequence of Saccharomyces cerevisiae: Then and now.</title>
        <authorList>
            <person name="Engel S.R."/>
            <person name="Dietrich F.S."/>
            <person name="Fisk D.G."/>
            <person name="Binkley G."/>
            <person name="Balakrishnan R."/>
            <person name="Costanzo M.C."/>
            <person name="Dwight S.S."/>
            <person name="Hitz B.C."/>
            <person name="Karra K."/>
            <person name="Nash R.S."/>
            <person name="Weng S."/>
            <person name="Wong E.D."/>
            <person name="Lloyd P."/>
            <person name="Skrzypek M.S."/>
            <person name="Miyasato S.R."/>
            <person name="Simison M."/>
            <person name="Cherry J.M."/>
        </authorList>
    </citation>
    <scope>GENOME REANNOTATION</scope>
    <source>
        <strain>ATCC 204508 / S288c</strain>
    </source>
</reference>
<reference key="3">
    <citation type="journal article" date="2007" name="Genome Res.">
        <title>Approaching a complete repository of sequence-verified protein-encoding clones for Saccharomyces cerevisiae.</title>
        <authorList>
            <person name="Hu Y."/>
            <person name="Rolfs A."/>
            <person name="Bhullar B."/>
            <person name="Murthy T.V.S."/>
            <person name="Zhu C."/>
            <person name="Berger M.F."/>
            <person name="Camargo A.A."/>
            <person name="Kelley F."/>
            <person name="McCarron S."/>
            <person name="Jepson D."/>
            <person name="Richardson A."/>
            <person name="Raphael J."/>
            <person name="Moreira D."/>
            <person name="Taycher E."/>
            <person name="Zuo D."/>
            <person name="Mohr S."/>
            <person name="Kane M.F."/>
            <person name="Williamson J."/>
            <person name="Simpson A.J.G."/>
            <person name="Bulyk M.L."/>
            <person name="Harlow E."/>
            <person name="Marsischky G."/>
            <person name="Kolodner R.D."/>
            <person name="LaBaer J."/>
        </authorList>
    </citation>
    <scope>NUCLEOTIDE SEQUENCE [GENOMIC DNA]</scope>
    <source>
        <strain>ATCC 204508 / S288c</strain>
    </source>
</reference>
<accession>P53234</accession>
<accession>D6VUI8</accession>
<evidence type="ECO:0000256" key="1">
    <source>
        <dbReference type="SAM" id="MobiDB-lite"/>
    </source>
</evidence>
<proteinExistence type="predicted"/>
<keyword id="KW-1185">Reference proteome</keyword>